<feature type="chain" id="PRO_0000196195" description="Protein TonB">
    <location>
        <begin position="1"/>
        <end position="243"/>
    </location>
</feature>
<feature type="topological domain" description="Cytoplasmic" evidence="2">
    <location>
        <begin position="1"/>
        <end position="12"/>
    </location>
</feature>
<feature type="transmembrane region" description="Helical; Signal-anchor" evidence="2">
    <location>
        <begin position="13"/>
        <end position="29"/>
    </location>
</feature>
<feature type="topological domain" description="Periplasmic" evidence="2">
    <location>
        <begin position="30"/>
        <end position="243"/>
    </location>
</feature>
<feature type="repeat" description="1-1">
    <location>
        <begin position="70"/>
        <end position="71"/>
    </location>
</feature>
<feature type="repeat" description="1-2">
    <location>
        <begin position="72"/>
        <end position="73"/>
    </location>
</feature>
<feature type="repeat" description="1-3">
    <location>
        <begin position="74"/>
        <end position="75"/>
    </location>
</feature>
<feature type="repeat" description="1-4">
    <location>
        <begin position="76"/>
        <end position="77"/>
    </location>
</feature>
<feature type="repeat" description="2-1">
    <location>
        <begin position="97"/>
        <end position="98"/>
    </location>
</feature>
<feature type="repeat" description="2-2">
    <location>
        <begin position="99"/>
        <end position="100"/>
    </location>
</feature>
<feature type="repeat" description="2-3">
    <location>
        <begin position="101"/>
        <end position="102"/>
    </location>
</feature>
<feature type="repeat" description="2-4">
    <location>
        <begin position="103"/>
        <end position="104"/>
    </location>
</feature>
<feature type="repeat" description="2-5">
    <location>
        <begin position="105"/>
        <end position="106"/>
    </location>
</feature>
<feature type="repeat" description="2-6">
    <location>
        <begin position="107"/>
        <end position="108"/>
    </location>
</feature>
<feature type="domain" description="TonB C-terminal" evidence="3">
    <location>
        <begin position="153"/>
        <end position="243"/>
    </location>
</feature>
<feature type="region of interest" description="Disordered" evidence="4">
    <location>
        <begin position="58"/>
        <end position="167"/>
    </location>
</feature>
<feature type="region of interest" description="4 X 2 AA tandem repeats of E-P">
    <location>
        <begin position="70"/>
        <end position="77"/>
    </location>
</feature>
<feature type="region of interest" description="6 X 2 AA tandem repeats of K-P">
    <location>
        <begin position="97"/>
        <end position="108"/>
    </location>
</feature>
<feature type="compositionally biased region" description="Low complexity" evidence="4">
    <location>
        <begin position="58"/>
        <end position="68"/>
    </location>
</feature>
<feature type="compositionally biased region" description="Acidic residues" evidence="4">
    <location>
        <begin position="69"/>
        <end position="79"/>
    </location>
</feature>
<feature type="compositionally biased region" description="Basic and acidic residues" evidence="4">
    <location>
        <begin position="106"/>
        <end position="122"/>
    </location>
</feature>
<feature type="compositionally biased region" description="Low complexity" evidence="4">
    <location>
        <begin position="134"/>
        <end position="155"/>
    </location>
</feature>
<feature type="sequence conflict" description="In Ref. 1; CAA48496." evidence="5" ref="1">
    <original>G</original>
    <variation>V</variation>
    <location>
        <position position="157"/>
    </location>
</feature>
<sequence length="243" mass="26679">MTLDLPRRFPWPTLLSVAIHGAVVAGLLYTSVHQVIEKPSPSQPIEITMVAPADLEPPQAAQPVVEPVVEPEPEPEPEVVPEPPKEVPVVIHKPEPKPKPKPKPKPKPEKKVEPKREVKPAEPRPVSPFENNNTAPARTAPSTTAATAKPMTTAPSGPKALKRGDPSYPQRAQALRIEGDVRVKFDVTADGRVENIQILSAKPANMFERDVKTAMRKWRYEAGRPGTGLTMNIKFRLNGVKMD</sequence>
<comment type="function">
    <text>Interacts with outer membrane receptor proteins that carry out high-affinity binding and energy dependent uptake into the periplasmic space of specific substrates. It could act to transduce energy from the cytoplasmic membrane to specific energy-requiring processes in the outer membrane, resulting in the release into the periplasm of ligands bound by these outer membrane proteins.</text>
</comment>
<comment type="subunit">
    <text evidence="1">Homodimer. Forms a complex with the accessory proteins ExbB and ExbD (By similarity).</text>
</comment>
<comment type="subcellular location">
    <subcellularLocation>
        <location evidence="1">Cell inner membrane</location>
        <topology evidence="1">Single-pass membrane protein</topology>
        <orientation evidence="1">Periplasmic side</orientation>
    </subcellularLocation>
</comment>
<comment type="similarity">
    <text evidence="5">Belongs to the TonB family.</text>
</comment>
<comment type="sequence caution" evidence="5">
    <conflict type="erroneous initiation">
        <sequence resource="EMBL-CDS" id="AEG98301"/>
    </conflict>
    <text>Extended N-terminus.</text>
</comment>
<proteinExistence type="inferred from homology"/>
<evidence type="ECO:0000250" key="1"/>
<evidence type="ECO:0000255" key="2"/>
<evidence type="ECO:0000255" key="3">
    <source>
        <dbReference type="PROSITE-ProRule" id="PRU01359"/>
    </source>
</evidence>
<evidence type="ECO:0000256" key="4">
    <source>
        <dbReference type="SAM" id="MobiDB-lite"/>
    </source>
</evidence>
<evidence type="ECO:0000305" key="5"/>
<reference key="1">
    <citation type="journal article" date="1993" name="J. Bacteriol.">
        <title>Molecular characterization of the Enterobacter aerogenes tonB gene: identification of a novel type of tonB box suppressor mutant.</title>
        <authorList>
            <person name="Bruske A.K."/>
            <person name="Heller K.J."/>
        </authorList>
    </citation>
    <scope>NUCLEOTIDE SEQUENCE [GENOMIC DNA]</scope>
    <scope>MUTAGENESIS</scope>
    <source>
        <strain>ATCC 13048 / DSM 30053 / CCUG 1429 / JCM 1235 / KCTC 2190 / NBRC 13534 / NCIMB 10102 / NCTC 10006 / CDC 819-56</strain>
    </source>
</reference>
<reference key="2">
    <citation type="journal article" date="2012" name="J. Bacteriol.">
        <title>Complete genome sequence of Enterobacter aerogenes KCTC 2190.</title>
        <authorList>
            <person name="Shin S.H."/>
            <person name="Kim S."/>
            <person name="Kim J.Y."/>
            <person name="Lee S."/>
            <person name="Um Y."/>
            <person name="Oh M.K."/>
            <person name="Kim Y.R."/>
            <person name="Lee J."/>
            <person name="Yang K.S."/>
        </authorList>
    </citation>
    <scope>NUCLEOTIDE SEQUENCE [LARGE SCALE GENOMIC DNA]</scope>
    <source>
        <strain>ATCC 13048 / DSM 30053 / CCUG 1429 / JCM 1235 / KCTC 2190 / NBRC 13534 / NCIMB 10102 / NCTC 10006 / CDC 819-56</strain>
    </source>
</reference>
<gene>
    <name type="primary">tonB</name>
    <name type="ordered locus">EAE_16950</name>
</gene>
<organism>
    <name type="scientific">Klebsiella aerogenes (strain ATCC 13048 / DSM 30053 / CCUG 1429 / JCM 1235 / KCTC 2190 / NBRC 13534 / NCIMB 10102 / NCTC 10006 / CDC 819-56)</name>
    <name type="common">Enterobacter aerogenes</name>
    <dbReference type="NCBI Taxonomy" id="1028307"/>
    <lineage>
        <taxon>Bacteria</taxon>
        <taxon>Pseudomonadati</taxon>
        <taxon>Pseudomonadota</taxon>
        <taxon>Gammaproteobacteria</taxon>
        <taxon>Enterobacterales</taxon>
        <taxon>Enterobacteriaceae</taxon>
        <taxon>Klebsiella/Raoultella group</taxon>
        <taxon>Klebsiella</taxon>
    </lineage>
</organism>
<protein>
    <recommendedName>
        <fullName>Protein TonB</fullName>
    </recommendedName>
</protein>
<name>TONB_KLEAK</name>
<dbReference type="EMBL" id="X68477">
    <property type="protein sequence ID" value="CAA48496.1"/>
    <property type="molecule type" value="Genomic_DNA"/>
</dbReference>
<dbReference type="EMBL" id="CP002824">
    <property type="protein sequence ID" value="AEG98301.1"/>
    <property type="status" value="ALT_INIT"/>
    <property type="molecule type" value="Genomic_DNA"/>
</dbReference>
<dbReference type="PIR" id="A36928">
    <property type="entry name" value="A36928"/>
</dbReference>
<dbReference type="RefSeq" id="YP_004593580.1">
    <property type="nucleotide sequence ID" value="NC_015663.1"/>
</dbReference>
<dbReference type="SMR" id="P46383"/>
<dbReference type="KEGG" id="eae:EAE_16950"/>
<dbReference type="PATRIC" id="fig|1028307.3.peg.3390"/>
<dbReference type="eggNOG" id="COG0810">
    <property type="taxonomic scope" value="Bacteria"/>
</dbReference>
<dbReference type="HOGENOM" id="CLU_098618_0_0_6"/>
<dbReference type="OrthoDB" id="1628901at2"/>
<dbReference type="Proteomes" id="UP000008881">
    <property type="component" value="Chromosome"/>
</dbReference>
<dbReference type="GO" id="GO:0030288">
    <property type="term" value="C:outer membrane-bounded periplasmic space"/>
    <property type="evidence" value="ECO:0007669"/>
    <property type="project" value="InterPro"/>
</dbReference>
<dbReference type="GO" id="GO:0098797">
    <property type="term" value="C:plasma membrane protein complex"/>
    <property type="evidence" value="ECO:0007669"/>
    <property type="project" value="TreeGrafter"/>
</dbReference>
<dbReference type="GO" id="GO:0031992">
    <property type="term" value="F:energy transducer activity"/>
    <property type="evidence" value="ECO:0007669"/>
    <property type="project" value="InterPro"/>
</dbReference>
<dbReference type="GO" id="GO:0015031">
    <property type="term" value="P:protein transport"/>
    <property type="evidence" value="ECO:0007669"/>
    <property type="project" value="UniProtKB-KW"/>
</dbReference>
<dbReference type="GO" id="GO:0015891">
    <property type="term" value="P:siderophore transport"/>
    <property type="evidence" value="ECO:0007669"/>
    <property type="project" value="InterPro"/>
</dbReference>
<dbReference type="GO" id="GO:0055085">
    <property type="term" value="P:transmembrane transport"/>
    <property type="evidence" value="ECO:0007669"/>
    <property type="project" value="InterPro"/>
</dbReference>
<dbReference type="Gene3D" id="3.30.2420.10">
    <property type="entry name" value="TonB"/>
    <property type="match status" value="1"/>
</dbReference>
<dbReference type="InterPro" id="IPR003538">
    <property type="entry name" value="TonB"/>
</dbReference>
<dbReference type="InterPro" id="IPR051045">
    <property type="entry name" value="TonB-dependent_transducer"/>
</dbReference>
<dbReference type="InterPro" id="IPR006260">
    <property type="entry name" value="TonB/TolA_C"/>
</dbReference>
<dbReference type="InterPro" id="IPR037682">
    <property type="entry name" value="TonB_C"/>
</dbReference>
<dbReference type="InterPro" id="IPR049924">
    <property type="entry name" value="TonB_pro-rich"/>
</dbReference>
<dbReference type="NCBIfam" id="NF008081">
    <property type="entry name" value="PRK10819.1-2"/>
    <property type="match status" value="1"/>
</dbReference>
<dbReference type="NCBIfam" id="TIGR01352">
    <property type="entry name" value="tonB_Cterm"/>
    <property type="match status" value="1"/>
</dbReference>
<dbReference type="PANTHER" id="PTHR33446:SF8">
    <property type="entry name" value="PROTEIN TONB"/>
    <property type="match status" value="1"/>
</dbReference>
<dbReference type="PANTHER" id="PTHR33446">
    <property type="entry name" value="PROTEIN TONB-RELATED"/>
    <property type="match status" value="1"/>
</dbReference>
<dbReference type="Pfam" id="PF03544">
    <property type="entry name" value="TonB_C"/>
    <property type="match status" value="1"/>
</dbReference>
<dbReference type="Pfam" id="PF16031">
    <property type="entry name" value="TonB_N"/>
    <property type="match status" value="1"/>
</dbReference>
<dbReference type="PRINTS" id="PR01374">
    <property type="entry name" value="TONBPROTEIN"/>
</dbReference>
<dbReference type="SUPFAM" id="SSF74653">
    <property type="entry name" value="TolA/TonB C-terminal domain"/>
    <property type="match status" value="1"/>
</dbReference>
<dbReference type="PROSITE" id="PS52015">
    <property type="entry name" value="TONB_CTD"/>
    <property type="match status" value="1"/>
</dbReference>
<accession>P46383</accession>
<accession>G0E3D2</accession>
<keyword id="KW-0997">Cell inner membrane</keyword>
<keyword id="KW-1003">Cell membrane</keyword>
<keyword id="KW-0472">Membrane</keyword>
<keyword id="KW-0653">Protein transport</keyword>
<keyword id="KW-1185">Reference proteome</keyword>
<keyword id="KW-0677">Repeat</keyword>
<keyword id="KW-0735">Signal-anchor</keyword>
<keyword id="KW-0812">Transmembrane</keyword>
<keyword id="KW-1133">Transmembrane helix</keyword>
<keyword id="KW-0813">Transport</keyword>